<organism>
    <name type="scientific">Oryza sativa subsp. indica</name>
    <name type="common">Rice</name>
    <dbReference type="NCBI Taxonomy" id="39946"/>
    <lineage>
        <taxon>Eukaryota</taxon>
        <taxon>Viridiplantae</taxon>
        <taxon>Streptophyta</taxon>
        <taxon>Embryophyta</taxon>
        <taxon>Tracheophyta</taxon>
        <taxon>Spermatophyta</taxon>
        <taxon>Magnoliopsida</taxon>
        <taxon>Liliopsida</taxon>
        <taxon>Poales</taxon>
        <taxon>Poaceae</taxon>
        <taxon>BOP clade</taxon>
        <taxon>Oryzoideae</taxon>
        <taxon>Oryzeae</taxon>
        <taxon>Oryzinae</taxon>
        <taxon>Oryza</taxon>
        <taxon>Oryza sativa</taxon>
    </lineage>
</organism>
<proteinExistence type="inferred from homology"/>
<comment type="function">
    <text evidence="2">This is a key enzyme of plant metabolism catalyzing the first reaction in the biosynthesis from L-phenylalanine of a wide variety of natural products based on the phenylpropane skeleton.</text>
</comment>
<comment type="catalytic activity">
    <reaction evidence="2">
        <text>L-phenylalanine = (E)-cinnamate + NH4(+)</text>
        <dbReference type="Rhea" id="RHEA:21384"/>
        <dbReference type="ChEBI" id="CHEBI:15669"/>
        <dbReference type="ChEBI" id="CHEBI:28938"/>
        <dbReference type="ChEBI" id="CHEBI:58095"/>
        <dbReference type="EC" id="4.3.1.24"/>
    </reaction>
</comment>
<comment type="pathway">
    <text evidence="5">Phenylpropanoid metabolism; trans-cinnamate biosynthesis; trans-cinnamate from L-phenylalanine: step 1/1.</text>
</comment>
<comment type="subunit">
    <text evidence="2">Homotetramer.</text>
</comment>
<comment type="subcellular location">
    <subcellularLocation>
        <location evidence="5">Cytoplasm</location>
    </subcellularLocation>
</comment>
<comment type="PTM">
    <text evidence="3">Contains an active site 4-methylidene-imidazol-5-one (MIO), which is formed autocatalytically by cyclization and dehydration of residues Ala-Ser-Gly.</text>
</comment>
<comment type="similarity">
    <text evidence="5">Belongs to the PAL/histidase family.</text>
</comment>
<comment type="sequence caution" evidence="5">
    <conflict type="frameshift">
        <sequence resource="EMBL-CDS" id="CAA61198"/>
    </conflict>
</comment>
<comment type="sequence caution" evidence="5">
    <conflict type="miscellaneous discrepancy">
        <sequence resource="EMBL-CDS" id="CAA61198"/>
    </conflict>
    <text>Sequencing errors.</text>
</comment>
<dbReference type="EC" id="4.3.1.24" evidence="2"/>
<dbReference type="EMBL" id="X87946">
    <property type="protein sequence ID" value="CAA61198.1"/>
    <property type="status" value="ALT_SEQ"/>
    <property type="molecule type" value="Genomic_DNA"/>
</dbReference>
<dbReference type="EMBL" id="CM000127">
    <property type="protein sequence ID" value="EAY86767.1"/>
    <property type="molecule type" value="Genomic_DNA"/>
</dbReference>
<dbReference type="PIR" id="S66313">
    <property type="entry name" value="S66313"/>
</dbReference>
<dbReference type="SMR" id="A2X7F7"/>
<dbReference type="STRING" id="39946.A2X7F7"/>
<dbReference type="EnsemblPlants" id="BGIOSGA005998-TA">
    <property type="protein sequence ID" value="BGIOSGA005998-PA"/>
    <property type="gene ID" value="BGIOSGA005998"/>
</dbReference>
<dbReference type="EnsemblPlants" id="OsKYG_02g0025350.01">
    <property type="protein sequence ID" value="OsKYG_02g0025350.01"/>
    <property type="gene ID" value="OsKYG_02g0025350"/>
</dbReference>
<dbReference type="EnsemblPlants" id="OsLaMu_02g0025150.01">
    <property type="protein sequence ID" value="OsLaMu_02g0025150.01"/>
    <property type="gene ID" value="OsLaMu_02g0025150"/>
</dbReference>
<dbReference type="EnsemblPlants" id="OsLima_02g0025560.01">
    <property type="protein sequence ID" value="OsLima_02g0025560.01"/>
    <property type="gene ID" value="OsLima_02g0025560"/>
</dbReference>
<dbReference type="EnsemblPlants" id="OsPr106_02g0025480.01">
    <property type="protein sequence ID" value="OsPr106_02g0025480.01"/>
    <property type="gene ID" value="OsPr106_02g0025480"/>
</dbReference>
<dbReference type="Gramene" id="BGIOSGA005998-TA">
    <property type="protein sequence ID" value="BGIOSGA005998-PA"/>
    <property type="gene ID" value="BGIOSGA005998"/>
</dbReference>
<dbReference type="Gramene" id="OsKYG_02g0025350.01">
    <property type="protein sequence ID" value="OsKYG_02g0025350.01"/>
    <property type="gene ID" value="OsKYG_02g0025350"/>
</dbReference>
<dbReference type="Gramene" id="OsLaMu_02g0025150.01">
    <property type="protein sequence ID" value="OsLaMu_02g0025150.01"/>
    <property type="gene ID" value="OsLaMu_02g0025150"/>
</dbReference>
<dbReference type="Gramene" id="OsLima_02g0025560.01">
    <property type="protein sequence ID" value="OsLima_02g0025560.01"/>
    <property type="gene ID" value="OsLima_02g0025560"/>
</dbReference>
<dbReference type="Gramene" id="OsPr106_02g0025480.01">
    <property type="protein sequence ID" value="OsPr106_02g0025480.01"/>
    <property type="gene ID" value="OsPr106_02g0025480"/>
</dbReference>
<dbReference type="HOGENOM" id="CLU_014801_3_0_1"/>
<dbReference type="OMA" id="VENTRCE"/>
<dbReference type="UniPathway" id="UPA00713">
    <property type="reaction ID" value="UER00725"/>
</dbReference>
<dbReference type="Proteomes" id="UP000007015">
    <property type="component" value="Chromosome 2"/>
</dbReference>
<dbReference type="GO" id="GO:0005737">
    <property type="term" value="C:cytoplasm"/>
    <property type="evidence" value="ECO:0007669"/>
    <property type="project" value="UniProtKB-SubCell"/>
</dbReference>
<dbReference type="GO" id="GO:0045548">
    <property type="term" value="F:phenylalanine ammonia-lyase activity"/>
    <property type="evidence" value="ECO:0007669"/>
    <property type="project" value="UniProtKB-EC"/>
</dbReference>
<dbReference type="GO" id="GO:0009800">
    <property type="term" value="P:cinnamic acid biosynthetic process"/>
    <property type="evidence" value="ECO:0007669"/>
    <property type="project" value="UniProtKB-UniPathway"/>
</dbReference>
<dbReference type="GO" id="GO:0006559">
    <property type="term" value="P:L-phenylalanine catabolic process"/>
    <property type="evidence" value="ECO:0007669"/>
    <property type="project" value="UniProtKB-KW"/>
</dbReference>
<dbReference type="CDD" id="cd00332">
    <property type="entry name" value="PAL-HAL"/>
    <property type="match status" value="1"/>
</dbReference>
<dbReference type="FunFam" id="1.10.274.20:FF:000001">
    <property type="entry name" value="Phenylalanine ammonia-lyase"/>
    <property type="match status" value="1"/>
</dbReference>
<dbReference type="FunFam" id="1.10.275.10:FF:000009">
    <property type="entry name" value="Phenylalanine ammonia-lyase"/>
    <property type="match status" value="1"/>
</dbReference>
<dbReference type="FunFam" id="1.20.200.10:FF:000009">
    <property type="entry name" value="Phenylalanine ammonia-lyase"/>
    <property type="match status" value="1"/>
</dbReference>
<dbReference type="Gene3D" id="1.20.200.10">
    <property type="entry name" value="Fumarase/aspartase (Central domain)"/>
    <property type="match status" value="1"/>
</dbReference>
<dbReference type="Gene3D" id="1.10.275.10">
    <property type="entry name" value="Fumarase/aspartase (N-terminal domain)"/>
    <property type="match status" value="1"/>
</dbReference>
<dbReference type="Gene3D" id="1.10.274.20">
    <property type="entry name" value="Phenylalanine ammonia-lyase 1, domain 3"/>
    <property type="match status" value="1"/>
</dbReference>
<dbReference type="InterPro" id="IPR001106">
    <property type="entry name" value="Aromatic_Lyase"/>
</dbReference>
<dbReference type="InterPro" id="IPR024083">
    <property type="entry name" value="Fumarase/histidase_N"/>
</dbReference>
<dbReference type="InterPro" id="IPR008948">
    <property type="entry name" value="L-Aspartase-like"/>
</dbReference>
<dbReference type="InterPro" id="IPR022313">
    <property type="entry name" value="Phe/His_NH3-lyase_AS"/>
</dbReference>
<dbReference type="InterPro" id="IPR005922">
    <property type="entry name" value="Phe_NH3-lyase"/>
</dbReference>
<dbReference type="InterPro" id="IPR023144">
    <property type="entry name" value="Phe_NH3-lyase_shielding_dom_sf"/>
</dbReference>
<dbReference type="NCBIfam" id="TIGR01226">
    <property type="entry name" value="phe_am_lyase"/>
    <property type="match status" value="1"/>
</dbReference>
<dbReference type="PANTHER" id="PTHR10362">
    <property type="entry name" value="HISTIDINE AMMONIA-LYASE"/>
    <property type="match status" value="1"/>
</dbReference>
<dbReference type="Pfam" id="PF00221">
    <property type="entry name" value="Lyase_aromatic"/>
    <property type="match status" value="1"/>
</dbReference>
<dbReference type="SUPFAM" id="SSF48557">
    <property type="entry name" value="L-aspartase-like"/>
    <property type="match status" value="1"/>
</dbReference>
<dbReference type="PROSITE" id="PS00488">
    <property type="entry name" value="PAL_HISTIDASE"/>
    <property type="match status" value="1"/>
</dbReference>
<feature type="chain" id="PRO_0000300256" description="Phenylalanine ammonia-lyase">
    <location>
        <begin position="1"/>
        <end position="713"/>
    </location>
</feature>
<feature type="active site" description="Proton donor/acceptor" evidence="3">
    <location>
        <position position="106"/>
    </location>
</feature>
<feature type="binding site" evidence="3">
    <location>
        <position position="257"/>
    </location>
    <ligand>
        <name>(E)-cinnamate</name>
        <dbReference type="ChEBI" id="CHEBI:15669"/>
    </ligand>
</feature>
<feature type="binding site" evidence="3">
    <location>
        <position position="345"/>
    </location>
    <ligand>
        <name>(E)-cinnamate</name>
        <dbReference type="ChEBI" id="CHEBI:15669"/>
    </ligand>
</feature>
<feature type="binding site" evidence="3">
    <location>
        <position position="351"/>
    </location>
    <ligand>
        <name>(E)-cinnamate</name>
        <dbReference type="ChEBI" id="CHEBI:15669"/>
    </ligand>
</feature>
<feature type="binding site" evidence="3">
    <location>
        <position position="381"/>
    </location>
    <ligand>
        <name>(E)-cinnamate</name>
        <dbReference type="ChEBI" id="CHEBI:15669"/>
    </ligand>
</feature>
<feature type="binding site" evidence="1">
    <location>
        <position position="453"/>
    </location>
    <ligand>
        <name>(E)-cinnamate</name>
        <dbReference type="ChEBI" id="CHEBI:15669"/>
    </ligand>
</feature>
<feature type="binding site" evidence="1">
    <location>
        <position position="481"/>
    </location>
    <ligand>
        <name>(E)-cinnamate</name>
        <dbReference type="ChEBI" id="CHEBI:15669"/>
    </ligand>
</feature>
<feature type="binding site" evidence="3">
    <location>
        <position position="484"/>
    </location>
    <ligand>
        <name>(E)-cinnamate</name>
        <dbReference type="ChEBI" id="CHEBI:15669"/>
    </ligand>
</feature>
<feature type="modified residue" description="2,3-didehydroalanine (Ser)" evidence="4">
    <location>
        <position position="200"/>
    </location>
</feature>
<feature type="cross-link" description="5-imidazolinone (Ala-Gly)" evidence="3">
    <location>
        <begin position="199"/>
        <end position="201"/>
    </location>
</feature>
<keyword id="KW-0963">Cytoplasm</keyword>
<keyword id="KW-0456">Lyase</keyword>
<keyword id="KW-0585">Phenylalanine catabolism</keyword>
<keyword id="KW-0587">Phenylpropanoid metabolism</keyword>
<keyword id="KW-1185">Reference proteome</keyword>
<gene>
    <name type="primary">ZB8</name>
    <name type="ORF">OsI_008000</name>
</gene>
<evidence type="ECO:0000250" key="1">
    <source>
        <dbReference type="UniProtKB" id="P11544"/>
    </source>
</evidence>
<evidence type="ECO:0000250" key="2">
    <source>
        <dbReference type="UniProtKB" id="P24481"/>
    </source>
</evidence>
<evidence type="ECO:0000250" key="3">
    <source>
        <dbReference type="UniProtKB" id="Q68G84"/>
    </source>
</evidence>
<evidence type="ECO:0000255" key="4">
    <source>
        <dbReference type="PROSITE-ProRule" id="PRU10122"/>
    </source>
</evidence>
<evidence type="ECO:0000305" key="5"/>
<sequence>MECENGRVSANGMSGLCVAAPRADPLNWGKATEEMTGSHLDEVKRMVAEYRQPLVKIEGASLRIAQVAAVAAAGEARVELDESARERVKASSDWVMNSMMNGTDSYGVTTGFGATSHRRTKEGGALQRELIRFLNAGAFGTGTDGHVLPAEATRAAMLVRINTLLQGYSGIRFEILEAIAKLLNANVTPCLPLRGTITASGDLVPLSYIAGLVTGRENAVAVAPDGSKVNAAEAFKIAGIQGGFFELQPKEGLAMVNGTAVGSGLASTVLFEANILAILAEVLSAVFCEVMNGKPEYTDHLTHKLKHHPGQIEAAAIMEHILEGSSYMKHAKKLGELDPLMKPKQDRYALRTSPQWLGPQIEVIRAATKSIEREINSVNDNPLIDVSRGKALHGGNFQGTPIGVSMDNTRLAIAAIGKLMFAQFSELVNDFYNNGLPSNLSGGRNPSLDYGFKGAEIAMASYCSELQFLGNPVTNHVQSAEQHNQDVNSLGLISSRKTAEAIDILKLMSSTFLIALCQAVDLRHIEENVKSAVKSCVMTVAKKTLSTNSTGDLHVARFCEKDLLKEIDREAVFAYADDPCSHNYPLMKKLRNVLVERALANGAAEFNADTSVFAKVAQFEEELRATLPGAIEAARAAVENGTAAIPSRITECRSYPLYRFVREELGTKYLTGEKTRSPGEELNKVLVAINEGKHIDPLLECLKEWNGEPLPIC</sequence>
<accession>A2X7F7</accession>
<accession>P53443</accession>
<accession>Q6K6P7</accession>
<protein>
    <recommendedName>
        <fullName>Phenylalanine ammonia-lyase</fullName>
        <ecNumber evidence="2">4.3.1.24</ecNumber>
    </recommendedName>
</protein>
<name>PAL2_ORYSI</name>
<reference key="1">
    <citation type="journal article" date="1995" name="Plant Mol. Biol.">
        <title>Cloning and properties of a rice gene encoding phenylalanine ammonia-lyase.</title>
        <authorList>
            <person name="Zhu Q."/>
            <person name="Dabi T."/>
            <person name="Beeche A."/>
            <person name="Yamamoto R."/>
            <person name="Lawton M.A."/>
            <person name="Lamb C."/>
        </authorList>
    </citation>
    <scope>NUCLEOTIDE SEQUENCE [GENOMIC DNA]</scope>
    <source>
        <strain>cv. IR36</strain>
    </source>
</reference>
<reference key="2">
    <citation type="journal article" date="2005" name="PLoS Biol.">
        <title>The genomes of Oryza sativa: a history of duplications.</title>
        <authorList>
            <person name="Yu J."/>
            <person name="Wang J."/>
            <person name="Lin W."/>
            <person name="Li S."/>
            <person name="Li H."/>
            <person name="Zhou J."/>
            <person name="Ni P."/>
            <person name="Dong W."/>
            <person name="Hu S."/>
            <person name="Zeng C."/>
            <person name="Zhang J."/>
            <person name="Zhang Y."/>
            <person name="Li R."/>
            <person name="Xu Z."/>
            <person name="Li S."/>
            <person name="Li X."/>
            <person name="Zheng H."/>
            <person name="Cong L."/>
            <person name="Lin L."/>
            <person name="Yin J."/>
            <person name="Geng J."/>
            <person name="Li G."/>
            <person name="Shi J."/>
            <person name="Liu J."/>
            <person name="Lv H."/>
            <person name="Li J."/>
            <person name="Wang J."/>
            <person name="Deng Y."/>
            <person name="Ran L."/>
            <person name="Shi X."/>
            <person name="Wang X."/>
            <person name="Wu Q."/>
            <person name="Li C."/>
            <person name="Ren X."/>
            <person name="Wang J."/>
            <person name="Wang X."/>
            <person name="Li D."/>
            <person name="Liu D."/>
            <person name="Zhang X."/>
            <person name="Ji Z."/>
            <person name="Zhao W."/>
            <person name="Sun Y."/>
            <person name="Zhang Z."/>
            <person name="Bao J."/>
            <person name="Han Y."/>
            <person name="Dong L."/>
            <person name="Ji J."/>
            <person name="Chen P."/>
            <person name="Wu S."/>
            <person name="Liu J."/>
            <person name="Xiao Y."/>
            <person name="Bu D."/>
            <person name="Tan J."/>
            <person name="Yang L."/>
            <person name="Ye C."/>
            <person name="Zhang J."/>
            <person name="Xu J."/>
            <person name="Zhou Y."/>
            <person name="Yu Y."/>
            <person name="Zhang B."/>
            <person name="Zhuang S."/>
            <person name="Wei H."/>
            <person name="Liu B."/>
            <person name="Lei M."/>
            <person name="Yu H."/>
            <person name="Li Y."/>
            <person name="Xu H."/>
            <person name="Wei S."/>
            <person name="He X."/>
            <person name="Fang L."/>
            <person name="Zhang Z."/>
            <person name="Zhang Y."/>
            <person name="Huang X."/>
            <person name="Su Z."/>
            <person name="Tong W."/>
            <person name="Li J."/>
            <person name="Tong Z."/>
            <person name="Li S."/>
            <person name="Ye J."/>
            <person name="Wang L."/>
            <person name="Fang L."/>
            <person name="Lei T."/>
            <person name="Chen C.-S."/>
            <person name="Chen H.-C."/>
            <person name="Xu Z."/>
            <person name="Li H."/>
            <person name="Huang H."/>
            <person name="Zhang F."/>
            <person name="Xu H."/>
            <person name="Li N."/>
            <person name="Zhao C."/>
            <person name="Li S."/>
            <person name="Dong L."/>
            <person name="Huang Y."/>
            <person name="Li L."/>
            <person name="Xi Y."/>
            <person name="Qi Q."/>
            <person name="Li W."/>
            <person name="Zhang B."/>
            <person name="Hu W."/>
            <person name="Zhang Y."/>
            <person name="Tian X."/>
            <person name="Jiao Y."/>
            <person name="Liang X."/>
            <person name="Jin J."/>
            <person name="Gao L."/>
            <person name="Zheng W."/>
            <person name="Hao B."/>
            <person name="Liu S.-M."/>
            <person name="Wang W."/>
            <person name="Yuan L."/>
            <person name="Cao M."/>
            <person name="McDermott J."/>
            <person name="Samudrala R."/>
            <person name="Wang J."/>
            <person name="Wong G.K.-S."/>
            <person name="Yang H."/>
        </authorList>
    </citation>
    <scope>NUCLEOTIDE SEQUENCE [LARGE SCALE GENOMIC DNA]</scope>
    <source>
        <strain>cv. 93-11</strain>
    </source>
</reference>